<accession>Q9DGC8</accession>
<accession>Q8JIQ7</accession>
<evidence type="ECO:0000250" key="1"/>
<evidence type="ECO:0000250" key="2">
    <source>
        <dbReference type="UniProtKB" id="P51918"/>
    </source>
</evidence>
<evidence type="ECO:0000269" key="3">
    <source>
    </source>
</evidence>
<evidence type="ECO:0000269" key="4">
    <source>
    </source>
</evidence>
<evidence type="ECO:0000303" key="5">
    <source>
    </source>
</evidence>
<evidence type="ECO:0000305" key="6"/>
<evidence type="ECO:0000312" key="7">
    <source>
        <dbReference type="EMBL" id="BAB16303.1"/>
    </source>
</evidence>
<evidence type="ECO:0000312" key="8">
    <source>
        <dbReference type="EMBL" id="BAC06421.1"/>
    </source>
</evidence>
<feature type="signal peptide" evidence="1">
    <location>
        <begin position="1"/>
        <end position="21"/>
    </location>
</feature>
<feature type="chain" id="PRO_0000012438" description="Progonadoliberin-1">
    <location>
        <begin position="22"/>
        <end position="91"/>
    </location>
</feature>
<feature type="peptide" id="PRO_0000012439" description="Gonadoliberin-1">
    <location>
        <begin position="22"/>
        <end position="31"/>
    </location>
</feature>
<feature type="peptide" id="PRO_0000012440" description="GnRH-associated peptide 1">
    <location>
        <begin position="35"/>
        <end position="91"/>
    </location>
</feature>
<feature type="modified residue" description="Pyrrolidone carboxylic acid" evidence="1">
    <location>
        <position position="22"/>
    </location>
</feature>
<feature type="modified residue" description="Glycine amide" evidence="1">
    <location>
        <position position="31"/>
    </location>
</feature>
<feature type="sequence conflict" description="In Ref. 2; BAC06421." evidence="6" ref="2">
    <original>P</original>
    <variation>L</variation>
    <location>
        <position position="8"/>
    </location>
</feature>
<feature type="sequence conflict" description="In Ref. 2; BAC06421." evidence="6" ref="2">
    <original>T</original>
    <variation>A</variation>
    <location>
        <position position="54"/>
    </location>
</feature>
<reference evidence="6" key="1">
    <citation type="journal article" date="2000" name="Biochem. Biophys. Res. Commun.">
        <title>A novel form of gonadotropin-releasing hormone in the medaka, Oryzias latipes.</title>
        <authorList>
            <person name="Okubo K."/>
            <person name="Amano M."/>
            <person name="Yoshiura Y."/>
            <person name="Suetake H."/>
            <person name="Aida K."/>
        </authorList>
    </citation>
    <scope>NUCLEOTIDE SEQUENCE</scope>
    <scope>TISSUE SPECIFICITY</scope>
    <source>
        <tissue evidence="7">Brain</tissue>
    </source>
</reference>
<reference evidence="8" key="2">
    <citation type="journal article" date="2002" name="Gene">
        <title>Structural characterization of GnRH loci in the medaka genome.</title>
        <authorList>
            <person name="Okubo K."/>
            <person name="Mitani H."/>
            <person name="Naruse K."/>
            <person name="Kondo M."/>
            <person name="Shima A."/>
            <person name="Tanaka M."/>
            <person name="Asakawa S."/>
            <person name="Shimizu N."/>
            <person name="Yoshiura Y."/>
            <person name="Aida K."/>
        </authorList>
    </citation>
    <scope>NUCLEOTIDE SEQUENCE [GENOMIC DNA]</scope>
    <source>
        <strain evidence="4">Himedaka</strain>
        <strain evidence="8">HNI</strain>
    </source>
</reference>
<protein>
    <recommendedName>
        <fullName>Progonadoliberin-1</fullName>
    </recommendedName>
    <alternativeName>
        <fullName>Medaka-type gonadotropin-releasing hormone</fullName>
        <shortName>mdGnRH</shortName>
    </alternativeName>
    <alternativeName>
        <fullName>Progonadoliberin I</fullName>
    </alternativeName>
    <alternativeName>
        <fullName>mfGnRH</fullName>
    </alternativeName>
    <component>
        <recommendedName>
            <fullName>Gonadoliberin-1</fullName>
        </recommendedName>
        <alternativeName>
            <fullName>Gonadoliberin I</fullName>
        </alternativeName>
        <alternativeName>
            <fullName>Gonadotropin-releasing hormone I</fullName>
            <shortName>GnRH I</shortName>
        </alternativeName>
        <alternativeName>
            <fullName>Luliberin I</fullName>
        </alternativeName>
        <alternativeName>
            <fullName>Luteinizing hormone-releasing hormone I</fullName>
            <shortName>LH-RH I</shortName>
        </alternativeName>
    </component>
    <component>
        <recommendedName>
            <fullName>GnRH-associated peptide 1</fullName>
        </recommendedName>
        <alternativeName>
            <fullName>GnRH-associated peptide I</fullName>
        </alternativeName>
    </component>
</protein>
<comment type="function">
    <text evidence="2">Stimulates the secretion of gonadotropins.</text>
</comment>
<comment type="subcellular location">
    <subcellularLocation>
        <location evidence="2">Secreted</location>
    </subcellularLocation>
</comment>
<comment type="tissue specificity">
    <text evidence="3">Expressed in the cell bodies of a cluster of neurons in the preoptic region.</text>
</comment>
<comment type="miscellaneous">
    <text evidence="5">Teleost species possess three paralogous GnRHs: mdGnRH and cGnRH-II have been identified in tetrapods; sGnRH has no tetrapod ortholog and is thought to be a duplication of cGnRH-II.</text>
</comment>
<comment type="similarity">
    <text evidence="6">Belongs to the GnRH family.</text>
</comment>
<proteinExistence type="evidence at transcript level"/>
<gene>
    <name type="primary">gnrh1</name>
</gene>
<sequence>MVVKTWMPWLLVSSVLSQGCCQHWSFGLSPGGKRELKYFPNTLENQIRLLNSNTPCSDLSHLEESSLAKIYRIKGLLGSVTEAKNGYRTYK</sequence>
<name>GON1_ORYLA</name>
<organism evidence="7">
    <name type="scientific">Oryzias latipes</name>
    <name type="common">Japanese rice fish</name>
    <name type="synonym">Japanese killifish</name>
    <dbReference type="NCBI Taxonomy" id="8090"/>
    <lineage>
        <taxon>Eukaryota</taxon>
        <taxon>Metazoa</taxon>
        <taxon>Chordata</taxon>
        <taxon>Craniata</taxon>
        <taxon>Vertebrata</taxon>
        <taxon>Euteleostomi</taxon>
        <taxon>Actinopterygii</taxon>
        <taxon>Neopterygii</taxon>
        <taxon>Teleostei</taxon>
        <taxon>Neoteleostei</taxon>
        <taxon>Acanthomorphata</taxon>
        <taxon>Ovalentaria</taxon>
        <taxon>Atherinomorphae</taxon>
        <taxon>Beloniformes</taxon>
        <taxon>Adrianichthyidae</taxon>
        <taxon>Oryziinae</taxon>
        <taxon>Oryzias</taxon>
    </lineage>
</organism>
<dbReference type="EMBL" id="AB041333">
    <property type="protein sequence ID" value="BAB16303.1"/>
    <property type="molecule type" value="mRNA"/>
</dbReference>
<dbReference type="EMBL" id="AB041336">
    <property type="protein sequence ID" value="BAC06419.1"/>
    <property type="molecule type" value="Genomic_DNA"/>
</dbReference>
<dbReference type="EMBL" id="AB074499">
    <property type="protein sequence ID" value="BAC06421.1"/>
    <property type="molecule type" value="Genomic_DNA"/>
</dbReference>
<dbReference type="PIR" id="JC7393">
    <property type="entry name" value="JC7393"/>
</dbReference>
<dbReference type="RefSeq" id="NP_001098169.1">
    <property type="nucleotide sequence ID" value="NM_001104699.2"/>
</dbReference>
<dbReference type="STRING" id="8090.ENSORLP00000017869"/>
<dbReference type="Ensembl" id="ENSORLT00000017870.2">
    <property type="protein sequence ID" value="ENSORLP00000017869.1"/>
    <property type="gene ID" value="ENSORLG00000014247.2"/>
</dbReference>
<dbReference type="GeneID" id="100049266"/>
<dbReference type="KEGG" id="ola:100049266"/>
<dbReference type="CTD" id="2796"/>
<dbReference type="eggNOG" id="ENOG502TDRE">
    <property type="taxonomic scope" value="Eukaryota"/>
</dbReference>
<dbReference type="GeneTree" id="ENSGT00760000119772"/>
<dbReference type="HOGENOM" id="CLU_2319525_0_0_1"/>
<dbReference type="InParanoid" id="Q9DGC8"/>
<dbReference type="OMA" id="CQHWSFG"/>
<dbReference type="OrthoDB" id="8716567at2759"/>
<dbReference type="Proteomes" id="UP000001038">
    <property type="component" value="Chromosome 9"/>
</dbReference>
<dbReference type="Proteomes" id="UP000265180">
    <property type="component" value="Unplaced"/>
</dbReference>
<dbReference type="Proteomes" id="UP000265200">
    <property type="component" value="Unplaced"/>
</dbReference>
<dbReference type="Bgee" id="ENSORLG00000014247">
    <property type="expression patterns" value="Expressed in brain and 2 other cell types or tissues"/>
</dbReference>
<dbReference type="GO" id="GO:0005615">
    <property type="term" value="C:extracellular space"/>
    <property type="evidence" value="ECO:0000250"/>
    <property type="project" value="UniProtKB"/>
</dbReference>
<dbReference type="GO" id="GO:0005179">
    <property type="term" value="F:hormone activity"/>
    <property type="evidence" value="ECO:0007669"/>
    <property type="project" value="UniProtKB-KW"/>
</dbReference>
<dbReference type="InterPro" id="IPR002012">
    <property type="entry name" value="GnRH"/>
</dbReference>
<dbReference type="PROSITE" id="PS00473">
    <property type="entry name" value="GNRH"/>
    <property type="match status" value="1"/>
</dbReference>
<keyword id="KW-0027">Amidation</keyword>
<keyword id="KW-0165">Cleavage on pair of basic residues</keyword>
<keyword id="KW-0372">Hormone</keyword>
<keyword id="KW-0873">Pyrrolidone carboxylic acid</keyword>
<keyword id="KW-1185">Reference proteome</keyword>
<keyword id="KW-0964">Secreted</keyword>
<keyword id="KW-0732">Signal</keyword>